<dbReference type="EMBL" id="CP000816">
    <property type="protein sequence ID" value="ABU82453.1"/>
    <property type="molecule type" value="Genomic_DNA"/>
</dbReference>
<dbReference type="RefSeq" id="WP_012123417.1">
    <property type="nucleotide sequence ID" value="NC_009776.1"/>
</dbReference>
<dbReference type="SMR" id="A8AC01"/>
<dbReference type="STRING" id="453591.Igni_1277"/>
<dbReference type="GeneID" id="5562905"/>
<dbReference type="KEGG" id="iho:Igni_1277"/>
<dbReference type="eggNOG" id="arCOG04088">
    <property type="taxonomic scope" value="Archaea"/>
</dbReference>
<dbReference type="HOGENOM" id="CLU_056222_2_0_2"/>
<dbReference type="OrthoDB" id="8644at2157"/>
<dbReference type="PhylomeDB" id="A8AC01"/>
<dbReference type="Proteomes" id="UP000000262">
    <property type="component" value="Chromosome"/>
</dbReference>
<dbReference type="GO" id="GO:0022625">
    <property type="term" value="C:cytosolic large ribosomal subunit"/>
    <property type="evidence" value="ECO:0007669"/>
    <property type="project" value="TreeGrafter"/>
</dbReference>
<dbReference type="GO" id="GO:0008097">
    <property type="term" value="F:5S rRNA binding"/>
    <property type="evidence" value="ECO:0007669"/>
    <property type="project" value="InterPro"/>
</dbReference>
<dbReference type="GO" id="GO:0003735">
    <property type="term" value="F:structural constituent of ribosome"/>
    <property type="evidence" value="ECO:0007669"/>
    <property type="project" value="InterPro"/>
</dbReference>
<dbReference type="GO" id="GO:0000027">
    <property type="term" value="P:ribosomal large subunit assembly"/>
    <property type="evidence" value="ECO:0007669"/>
    <property type="project" value="TreeGrafter"/>
</dbReference>
<dbReference type="GO" id="GO:0006412">
    <property type="term" value="P:translation"/>
    <property type="evidence" value="ECO:0007669"/>
    <property type="project" value="UniProtKB-UniRule"/>
</dbReference>
<dbReference type="CDD" id="cd00432">
    <property type="entry name" value="Ribosomal_L18_L5e"/>
    <property type="match status" value="1"/>
</dbReference>
<dbReference type="Gene3D" id="3.30.420.100">
    <property type="match status" value="1"/>
</dbReference>
<dbReference type="HAMAP" id="MF_01337_A">
    <property type="entry name" value="Ribosomal_uL18_A"/>
    <property type="match status" value="1"/>
</dbReference>
<dbReference type="InterPro" id="IPR005485">
    <property type="entry name" value="Rbsml_uL18_euk"/>
</dbReference>
<dbReference type="NCBIfam" id="NF006342">
    <property type="entry name" value="PRK08569.1"/>
    <property type="match status" value="1"/>
</dbReference>
<dbReference type="PANTHER" id="PTHR23410:SF12">
    <property type="entry name" value="LARGE RIBOSOMAL SUBUNIT PROTEIN UL18"/>
    <property type="match status" value="1"/>
</dbReference>
<dbReference type="PANTHER" id="PTHR23410">
    <property type="entry name" value="RIBOSOMAL PROTEIN L5-RELATED"/>
    <property type="match status" value="1"/>
</dbReference>
<dbReference type="Pfam" id="PF17144">
    <property type="entry name" value="Ribosomal_L5e"/>
    <property type="match status" value="1"/>
</dbReference>
<dbReference type="SUPFAM" id="SSF53137">
    <property type="entry name" value="Translational machinery components"/>
    <property type="match status" value="1"/>
</dbReference>
<feature type="chain" id="PRO_1000053039" description="Large ribosomal subunit protein uL18">
    <location>
        <begin position="1"/>
        <end position="204"/>
    </location>
</feature>
<sequence>MARGPRYKVPRRRRREGKTNYYKRYTMALSRKPRFVVRKSNKYVWVQVIEFAPEGDKVIAAAHSKELEKKYGWKGYGNSLPAVYLTGMLAALRAKKAGIQYAVPDIGLHKPTKGARVFAAIKAANDVGLEVPVGDVVPDESRIRGEHIASYAESLKNENPEEYQRRFAKLLERGLKPEDYPKHFEEVKAKILEDYKVEQPATTG</sequence>
<keyword id="KW-1185">Reference proteome</keyword>
<keyword id="KW-0687">Ribonucleoprotein</keyword>
<keyword id="KW-0689">Ribosomal protein</keyword>
<keyword id="KW-0694">RNA-binding</keyword>
<keyword id="KW-0699">rRNA-binding</keyword>
<name>RL18_IGNH4</name>
<proteinExistence type="inferred from homology"/>
<gene>
    <name evidence="1" type="primary">rpl18</name>
    <name type="ordered locus">Igni_1277</name>
</gene>
<evidence type="ECO:0000255" key="1">
    <source>
        <dbReference type="HAMAP-Rule" id="MF_01337"/>
    </source>
</evidence>
<evidence type="ECO:0000305" key="2"/>
<organism>
    <name type="scientific">Ignicoccus hospitalis (strain KIN4/I / DSM 18386 / JCM 14125)</name>
    <dbReference type="NCBI Taxonomy" id="453591"/>
    <lineage>
        <taxon>Archaea</taxon>
        <taxon>Thermoproteota</taxon>
        <taxon>Thermoprotei</taxon>
        <taxon>Desulfurococcales</taxon>
        <taxon>Desulfurococcaceae</taxon>
        <taxon>Ignicoccus</taxon>
    </lineage>
</organism>
<protein>
    <recommendedName>
        <fullName evidence="1">Large ribosomal subunit protein uL18</fullName>
    </recommendedName>
    <alternativeName>
        <fullName evidence="2">50S ribosomal protein L18</fullName>
    </alternativeName>
</protein>
<reference key="1">
    <citation type="journal article" date="2008" name="Genome Biol.">
        <title>A genomic analysis of the archaeal system Ignicoccus hospitalis-Nanoarchaeum equitans.</title>
        <authorList>
            <person name="Podar M."/>
            <person name="Anderson I."/>
            <person name="Makarova K.S."/>
            <person name="Elkins J.G."/>
            <person name="Ivanova N."/>
            <person name="Wall M.A."/>
            <person name="Lykidis A."/>
            <person name="Mavromatis K."/>
            <person name="Sun H."/>
            <person name="Hudson M.E."/>
            <person name="Chen W."/>
            <person name="Deciu C."/>
            <person name="Hutchison D."/>
            <person name="Eads J.R."/>
            <person name="Anderson A."/>
            <person name="Fernandes F."/>
            <person name="Szeto E."/>
            <person name="Lapidus A."/>
            <person name="Kyrpides N.C."/>
            <person name="Saier M.H. Jr."/>
            <person name="Richardson P.M."/>
            <person name="Rachel R."/>
            <person name="Huber H."/>
            <person name="Eisen J.A."/>
            <person name="Koonin E.V."/>
            <person name="Keller M."/>
            <person name="Stetter K.O."/>
        </authorList>
    </citation>
    <scope>NUCLEOTIDE SEQUENCE [LARGE SCALE GENOMIC DNA]</scope>
    <source>
        <strain>KIN4/I / DSM 18386 / JCM 14125</strain>
    </source>
</reference>
<comment type="function">
    <text evidence="1">This is one of the proteins that bind and probably mediate the attachment of the 5S RNA into the large ribosomal subunit, where it forms part of the central protuberance.</text>
</comment>
<comment type="subunit">
    <text evidence="1">Part of the 50S ribosomal subunit. Contacts the 5S and 23S rRNAs.</text>
</comment>
<comment type="similarity">
    <text evidence="1">Belongs to the universal ribosomal protein uL18 family.</text>
</comment>
<accession>A8AC01</accession>